<accession>A8LE02</accession>
<proteinExistence type="inferred from homology"/>
<comment type="function">
    <text evidence="1">Catalyzes the anti-1,4-elimination of the C-3 phosphate and the C-6 proR hydrogen from 5-enolpyruvylshikimate-3-phosphate (EPSP) to yield chorismate, which is the branch point compound that serves as the starting substrate for the three terminal pathways of aromatic amino acid biosynthesis. This reaction introduces a second double bond into the aromatic ring system.</text>
</comment>
<comment type="catalytic activity">
    <reaction evidence="1">
        <text>5-O-(1-carboxyvinyl)-3-phosphoshikimate = chorismate + phosphate</text>
        <dbReference type="Rhea" id="RHEA:21020"/>
        <dbReference type="ChEBI" id="CHEBI:29748"/>
        <dbReference type="ChEBI" id="CHEBI:43474"/>
        <dbReference type="ChEBI" id="CHEBI:57701"/>
        <dbReference type="EC" id="4.2.3.5"/>
    </reaction>
</comment>
<comment type="cofactor">
    <cofactor evidence="1">
        <name>FMNH2</name>
        <dbReference type="ChEBI" id="CHEBI:57618"/>
    </cofactor>
    <text evidence="1">Reduced FMN (FMNH(2)).</text>
</comment>
<comment type="pathway">
    <text evidence="1">Metabolic intermediate biosynthesis; chorismate biosynthesis; chorismate from D-erythrose 4-phosphate and phosphoenolpyruvate: step 7/7.</text>
</comment>
<comment type="subunit">
    <text evidence="1">Homotetramer.</text>
</comment>
<comment type="similarity">
    <text evidence="1">Belongs to the chorismate synthase family.</text>
</comment>
<name>AROC_PARS2</name>
<reference key="1">
    <citation type="journal article" date="2007" name="Genome Res.">
        <title>Genome characteristics of facultatively symbiotic Frankia sp. strains reflect host range and host plant biogeography.</title>
        <authorList>
            <person name="Normand P."/>
            <person name="Lapierre P."/>
            <person name="Tisa L.S."/>
            <person name="Gogarten J.P."/>
            <person name="Alloisio N."/>
            <person name="Bagnarol E."/>
            <person name="Bassi C.A."/>
            <person name="Berry A.M."/>
            <person name="Bickhart D.M."/>
            <person name="Choisne N."/>
            <person name="Couloux A."/>
            <person name="Cournoyer B."/>
            <person name="Cruveiller S."/>
            <person name="Daubin V."/>
            <person name="Demange N."/>
            <person name="Francino M.P."/>
            <person name="Goltsman E."/>
            <person name="Huang Y."/>
            <person name="Kopp O.R."/>
            <person name="Labarre L."/>
            <person name="Lapidus A."/>
            <person name="Lavire C."/>
            <person name="Marechal J."/>
            <person name="Martinez M."/>
            <person name="Mastronunzio J.E."/>
            <person name="Mullin B.C."/>
            <person name="Niemann J."/>
            <person name="Pujic P."/>
            <person name="Rawnsley T."/>
            <person name="Rouy Z."/>
            <person name="Schenowitz C."/>
            <person name="Sellstedt A."/>
            <person name="Tavares F."/>
            <person name="Tomkins J.P."/>
            <person name="Vallenet D."/>
            <person name="Valverde C."/>
            <person name="Wall L.G."/>
            <person name="Wang Y."/>
            <person name="Medigue C."/>
            <person name="Benson D.R."/>
        </authorList>
    </citation>
    <scope>NUCLEOTIDE SEQUENCE [LARGE SCALE GENOMIC DNA]</scope>
    <source>
        <strain>EAN1pec</strain>
    </source>
</reference>
<evidence type="ECO:0000255" key="1">
    <source>
        <dbReference type="HAMAP-Rule" id="MF_00300"/>
    </source>
</evidence>
<protein>
    <recommendedName>
        <fullName evidence="1">Chorismate synthase</fullName>
        <shortName evidence="1">CS</shortName>
        <ecNumber evidence="1">4.2.3.5</ecNumber>
    </recommendedName>
    <alternativeName>
        <fullName evidence="1">5-enolpyruvylshikimate-3-phosphate phospholyase</fullName>
    </alternativeName>
</protein>
<sequence length="394" mass="41249">MVRWLTAGESHGPALVATVEGLPAGIRVSSTDIGAELARRRLGHGRGARMKFEQDEIELLGGLRHGVSLGGPVSVVVRNTEWPKWERVMAPDPIDPAELEGLGRNAPLTRPRPGHADLAGMQKYGFDDARPVLERASARETAARVALGTVARALLRQAYGIEVVSHVVAIGAVEVPPGTPPPTSLAVVDADPVRCADPASSALMVAEIDAAHRDADTLGGIVEVLAYGCPPGLGSYVHGDRRLDARLAGELMGIQAIKGVEFGDGFRTARRRGSVAHDEIEPLEGPGRRVRRASDRAGGVEGGMTTGEPLRVRAAMKPISSLSKPLATIDVATGDPAVAIAQRSDVCAVPAAGVVAEAMVALVLAGAALEKFGGDSVEETRRNYEGYLKSLAVR</sequence>
<organism>
    <name type="scientific">Parafrankia sp. (strain EAN1pec)</name>
    <dbReference type="NCBI Taxonomy" id="298653"/>
    <lineage>
        <taxon>Bacteria</taxon>
        <taxon>Bacillati</taxon>
        <taxon>Actinomycetota</taxon>
        <taxon>Actinomycetes</taxon>
        <taxon>Frankiales</taxon>
        <taxon>Frankiaceae</taxon>
        <taxon>Parafrankia</taxon>
    </lineage>
</organism>
<feature type="chain" id="PRO_1000115353" description="Chorismate synthase">
    <location>
        <begin position="1"/>
        <end position="394"/>
    </location>
</feature>
<feature type="binding site" evidence="1">
    <location>
        <position position="40"/>
    </location>
    <ligand>
        <name>NADP(+)</name>
        <dbReference type="ChEBI" id="CHEBI:58349"/>
    </ligand>
</feature>
<feature type="binding site" evidence="1">
    <location>
        <position position="46"/>
    </location>
    <ligand>
        <name>NADP(+)</name>
        <dbReference type="ChEBI" id="CHEBI:58349"/>
    </ligand>
</feature>
<feature type="binding site" evidence="1">
    <location>
        <begin position="135"/>
        <end position="137"/>
    </location>
    <ligand>
        <name>FMN</name>
        <dbReference type="ChEBI" id="CHEBI:58210"/>
    </ligand>
</feature>
<feature type="binding site" evidence="1">
    <location>
        <begin position="255"/>
        <end position="256"/>
    </location>
    <ligand>
        <name>FMN</name>
        <dbReference type="ChEBI" id="CHEBI:58210"/>
    </ligand>
</feature>
<feature type="binding site" evidence="1">
    <location>
        <position position="302"/>
    </location>
    <ligand>
        <name>FMN</name>
        <dbReference type="ChEBI" id="CHEBI:58210"/>
    </ligand>
</feature>
<feature type="binding site" evidence="1">
    <location>
        <begin position="317"/>
        <end position="321"/>
    </location>
    <ligand>
        <name>FMN</name>
        <dbReference type="ChEBI" id="CHEBI:58210"/>
    </ligand>
</feature>
<feature type="binding site" evidence="1">
    <location>
        <position position="343"/>
    </location>
    <ligand>
        <name>FMN</name>
        <dbReference type="ChEBI" id="CHEBI:58210"/>
    </ligand>
</feature>
<dbReference type="EC" id="4.2.3.5" evidence="1"/>
<dbReference type="EMBL" id="CP000820">
    <property type="protein sequence ID" value="ABW11137.1"/>
    <property type="molecule type" value="Genomic_DNA"/>
</dbReference>
<dbReference type="RefSeq" id="WP_020459310.1">
    <property type="nucleotide sequence ID" value="NC_009921.1"/>
</dbReference>
<dbReference type="SMR" id="A8LE02"/>
<dbReference type="STRING" id="298653.Franean1_1699"/>
<dbReference type="KEGG" id="fre:Franean1_1699"/>
<dbReference type="eggNOG" id="COG0082">
    <property type="taxonomic scope" value="Bacteria"/>
</dbReference>
<dbReference type="HOGENOM" id="CLU_034547_2_0_11"/>
<dbReference type="UniPathway" id="UPA00053">
    <property type="reaction ID" value="UER00090"/>
</dbReference>
<dbReference type="GO" id="GO:0005829">
    <property type="term" value="C:cytosol"/>
    <property type="evidence" value="ECO:0007669"/>
    <property type="project" value="TreeGrafter"/>
</dbReference>
<dbReference type="GO" id="GO:0004107">
    <property type="term" value="F:chorismate synthase activity"/>
    <property type="evidence" value="ECO:0007669"/>
    <property type="project" value="UniProtKB-UniRule"/>
</dbReference>
<dbReference type="GO" id="GO:0010181">
    <property type="term" value="F:FMN binding"/>
    <property type="evidence" value="ECO:0007669"/>
    <property type="project" value="TreeGrafter"/>
</dbReference>
<dbReference type="GO" id="GO:0008652">
    <property type="term" value="P:amino acid biosynthetic process"/>
    <property type="evidence" value="ECO:0007669"/>
    <property type="project" value="UniProtKB-KW"/>
</dbReference>
<dbReference type="GO" id="GO:0009073">
    <property type="term" value="P:aromatic amino acid family biosynthetic process"/>
    <property type="evidence" value="ECO:0007669"/>
    <property type="project" value="UniProtKB-KW"/>
</dbReference>
<dbReference type="GO" id="GO:0009423">
    <property type="term" value="P:chorismate biosynthetic process"/>
    <property type="evidence" value="ECO:0007669"/>
    <property type="project" value="UniProtKB-UniRule"/>
</dbReference>
<dbReference type="CDD" id="cd07304">
    <property type="entry name" value="Chorismate_synthase"/>
    <property type="match status" value="1"/>
</dbReference>
<dbReference type="FunFam" id="3.60.150.10:FF:000002">
    <property type="entry name" value="Chorismate synthase"/>
    <property type="match status" value="1"/>
</dbReference>
<dbReference type="Gene3D" id="3.60.150.10">
    <property type="entry name" value="Chorismate synthase AroC"/>
    <property type="match status" value="1"/>
</dbReference>
<dbReference type="HAMAP" id="MF_00300">
    <property type="entry name" value="Chorismate_synth"/>
    <property type="match status" value="1"/>
</dbReference>
<dbReference type="InterPro" id="IPR000453">
    <property type="entry name" value="Chorismate_synth"/>
</dbReference>
<dbReference type="InterPro" id="IPR035904">
    <property type="entry name" value="Chorismate_synth_AroC_sf"/>
</dbReference>
<dbReference type="InterPro" id="IPR020541">
    <property type="entry name" value="Chorismate_synthase_CS"/>
</dbReference>
<dbReference type="NCBIfam" id="TIGR00033">
    <property type="entry name" value="aroC"/>
    <property type="match status" value="1"/>
</dbReference>
<dbReference type="NCBIfam" id="NF003793">
    <property type="entry name" value="PRK05382.1"/>
    <property type="match status" value="1"/>
</dbReference>
<dbReference type="PANTHER" id="PTHR21085">
    <property type="entry name" value="CHORISMATE SYNTHASE"/>
    <property type="match status" value="1"/>
</dbReference>
<dbReference type="PANTHER" id="PTHR21085:SF0">
    <property type="entry name" value="CHORISMATE SYNTHASE"/>
    <property type="match status" value="1"/>
</dbReference>
<dbReference type="Pfam" id="PF01264">
    <property type="entry name" value="Chorismate_synt"/>
    <property type="match status" value="1"/>
</dbReference>
<dbReference type="PIRSF" id="PIRSF001456">
    <property type="entry name" value="Chorismate_synth"/>
    <property type="match status" value="1"/>
</dbReference>
<dbReference type="SUPFAM" id="SSF103263">
    <property type="entry name" value="Chorismate synthase, AroC"/>
    <property type="match status" value="1"/>
</dbReference>
<dbReference type="PROSITE" id="PS00787">
    <property type="entry name" value="CHORISMATE_SYNTHASE_1"/>
    <property type="match status" value="1"/>
</dbReference>
<dbReference type="PROSITE" id="PS00788">
    <property type="entry name" value="CHORISMATE_SYNTHASE_2"/>
    <property type="match status" value="1"/>
</dbReference>
<dbReference type="PROSITE" id="PS00789">
    <property type="entry name" value="CHORISMATE_SYNTHASE_3"/>
    <property type="match status" value="1"/>
</dbReference>
<gene>
    <name evidence="1" type="primary">aroC</name>
    <name type="ordered locus">Franean1_1699</name>
</gene>
<keyword id="KW-0028">Amino-acid biosynthesis</keyword>
<keyword id="KW-0057">Aromatic amino acid biosynthesis</keyword>
<keyword id="KW-0274">FAD</keyword>
<keyword id="KW-0285">Flavoprotein</keyword>
<keyword id="KW-0288">FMN</keyword>
<keyword id="KW-0456">Lyase</keyword>
<keyword id="KW-0521">NADP</keyword>